<dbReference type="EC" id="2.8.4.4" evidence="1"/>
<dbReference type="EMBL" id="AE017282">
    <property type="protein sequence ID" value="AAU90752.1"/>
    <property type="molecule type" value="Genomic_DNA"/>
</dbReference>
<dbReference type="RefSeq" id="WP_010959453.1">
    <property type="nucleotide sequence ID" value="NC_002977.6"/>
</dbReference>
<dbReference type="SMR" id="Q60CM4"/>
<dbReference type="STRING" id="243233.MCA0082"/>
<dbReference type="GeneID" id="88222432"/>
<dbReference type="KEGG" id="mca:MCA0082"/>
<dbReference type="eggNOG" id="COG0621">
    <property type="taxonomic scope" value="Bacteria"/>
</dbReference>
<dbReference type="HOGENOM" id="CLU_018697_0_0_6"/>
<dbReference type="Proteomes" id="UP000006821">
    <property type="component" value="Chromosome"/>
</dbReference>
<dbReference type="GO" id="GO:0005829">
    <property type="term" value="C:cytosol"/>
    <property type="evidence" value="ECO:0007669"/>
    <property type="project" value="TreeGrafter"/>
</dbReference>
<dbReference type="GO" id="GO:0051539">
    <property type="term" value="F:4 iron, 4 sulfur cluster binding"/>
    <property type="evidence" value="ECO:0007669"/>
    <property type="project" value="UniProtKB-UniRule"/>
</dbReference>
<dbReference type="GO" id="GO:0035599">
    <property type="term" value="F:aspartic acid methylthiotransferase activity"/>
    <property type="evidence" value="ECO:0007669"/>
    <property type="project" value="TreeGrafter"/>
</dbReference>
<dbReference type="GO" id="GO:0046872">
    <property type="term" value="F:metal ion binding"/>
    <property type="evidence" value="ECO:0007669"/>
    <property type="project" value="UniProtKB-KW"/>
</dbReference>
<dbReference type="GO" id="GO:0103039">
    <property type="term" value="F:protein methylthiotransferase activity"/>
    <property type="evidence" value="ECO:0007669"/>
    <property type="project" value="UniProtKB-EC"/>
</dbReference>
<dbReference type="GO" id="GO:0006400">
    <property type="term" value="P:tRNA modification"/>
    <property type="evidence" value="ECO:0007669"/>
    <property type="project" value="InterPro"/>
</dbReference>
<dbReference type="CDD" id="cd01335">
    <property type="entry name" value="Radical_SAM"/>
    <property type="match status" value="1"/>
</dbReference>
<dbReference type="FunFam" id="3.40.50.12160:FF:000002">
    <property type="entry name" value="Ribosomal protein S12 methylthiotransferase RimO"/>
    <property type="match status" value="1"/>
</dbReference>
<dbReference type="FunFam" id="3.80.30.20:FF:000001">
    <property type="entry name" value="tRNA-2-methylthio-N(6)-dimethylallyladenosine synthase 2"/>
    <property type="match status" value="1"/>
</dbReference>
<dbReference type="Gene3D" id="3.40.50.12160">
    <property type="entry name" value="Methylthiotransferase, N-terminal domain"/>
    <property type="match status" value="1"/>
</dbReference>
<dbReference type="Gene3D" id="2.40.50.140">
    <property type="entry name" value="Nucleic acid-binding proteins"/>
    <property type="match status" value="1"/>
</dbReference>
<dbReference type="Gene3D" id="3.80.30.20">
    <property type="entry name" value="tm_1862 like domain"/>
    <property type="match status" value="1"/>
</dbReference>
<dbReference type="HAMAP" id="MF_01865">
    <property type="entry name" value="MTTase_RimO"/>
    <property type="match status" value="1"/>
</dbReference>
<dbReference type="InterPro" id="IPR006638">
    <property type="entry name" value="Elp3/MiaA/NifB-like_rSAM"/>
</dbReference>
<dbReference type="InterPro" id="IPR005839">
    <property type="entry name" value="Methylthiotransferase"/>
</dbReference>
<dbReference type="InterPro" id="IPR020612">
    <property type="entry name" value="Methylthiotransferase_CS"/>
</dbReference>
<dbReference type="InterPro" id="IPR013848">
    <property type="entry name" value="Methylthiotransferase_N"/>
</dbReference>
<dbReference type="InterPro" id="IPR038135">
    <property type="entry name" value="Methylthiotransferase_N_sf"/>
</dbReference>
<dbReference type="InterPro" id="IPR012340">
    <property type="entry name" value="NA-bd_OB-fold"/>
</dbReference>
<dbReference type="InterPro" id="IPR005840">
    <property type="entry name" value="Ribosomal_uS12_MeSTrfase_RimO"/>
</dbReference>
<dbReference type="InterPro" id="IPR007197">
    <property type="entry name" value="rSAM"/>
</dbReference>
<dbReference type="InterPro" id="IPR023404">
    <property type="entry name" value="rSAM_horseshoe"/>
</dbReference>
<dbReference type="InterPro" id="IPR002792">
    <property type="entry name" value="TRAM_dom"/>
</dbReference>
<dbReference type="NCBIfam" id="TIGR01125">
    <property type="entry name" value="30S ribosomal protein S12 methylthiotransferase RimO"/>
    <property type="match status" value="1"/>
</dbReference>
<dbReference type="NCBIfam" id="TIGR00089">
    <property type="entry name" value="MiaB/RimO family radical SAM methylthiotransferase"/>
    <property type="match status" value="1"/>
</dbReference>
<dbReference type="PANTHER" id="PTHR43837">
    <property type="entry name" value="RIBOSOMAL PROTEIN S12 METHYLTHIOTRANSFERASE RIMO"/>
    <property type="match status" value="1"/>
</dbReference>
<dbReference type="PANTHER" id="PTHR43837:SF1">
    <property type="entry name" value="RIBOSOMAL PROTEIN US12 METHYLTHIOTRANSFERASE RIMO"/>
    <property type="match status" value="1"/>
</dbReference>
<dbReference type="Pfam" id="PF04055">
    <property type="entry name" value="Radical_SAM"/>
    <property type="match status" value="1"/>
</dbReference>
<dbReference type="Pfam" id="PF18693">
    <property type="entry name" value="TRAM_2"/>
    <property type="match status" value="1"/>
</dbReference>
<dbReference type="Pfam" id="PF00919">
    <property type="entry name" value="UPF0004"/>
    <property type="match status" value="1"/>
</dbReference>
<dbReference type="SFLD" id="SFLDG01082">
    <property type="entry name" value="B12-binding_domain_containing"/>
    <property type="match status" value="1"/>
</dbReference>
<dbReference type="SFLD" id="SFLDS00029">
    <property type="entry name" value="Radical_SAM"/>
    <property type="match status" value="1"/>
</dbReference>
<dbReference type="SFLD" id="SFLDF00274">
    <property type="entry name" value="ribosomal_protein_S12_methylth"/>
    <property type="match status" value="1"/>
</dbReference>
<dbReference type="SMART" id="SM00729">
    <property type="entry name" value="Elp3"/>
    <property type="match status" value="1"/>
</dbReference>
<dbReference type="SUPFAM" id="SSF102114">
    <property type="entry name" value="Radical SAM enzymes"/>
    <property type="match status" value="1"/>
</dbReference>
<dbReference type="PROSITE" id="PS51449">
    <property type="entry name" value="MTTASE_N"/>
    <property type="match status" value="1"/>
</dbReference>
<dbReference type="PROSITE" id="PS01278">
    <property type="entry name" value="MTTASE_RADICAL"/>
    <property type="match status" value="1"/>
</dbReference>
<dbReference type="PROSITE" id="PS51918">
    <property type="entry name" value="RADICAL_SAM"/>
    <property type="match status" value="1"/>
</dbReference>
<dbReference type="PROSITE" id="PS50926">
    <property type="entry name" value="TRAM"/>
    <property type="match status" value="1"/>
</dbReference>
<accession>Q60CM4</accession>
<protein>
    <recommendedName>
        <fullName evidence="1">Ribosomal protein uS12 methylthiotransferase RimO</fullName>
        <shortName evidence="1">uS12 MTTase</shortName>
        <shortName evidence="1">uS12 methylthiotransferase</shortName>
        <ecNumber evidence="1">2.8.4.4</ecNumber>
    </recommendedName>
    <alternativeName>
        <fullName evidence="1">Ribosomal protein uS12 (aspartate-C(3))-methylthiotransferase</fullName>
    </alternativeName>
    <alternativeName>
        <fullName evidence="1">Ribosome maturation factor RimO</fullName>
    </alternativeName>
</protein>
<name>RIMO_METCA</name>
<gene>
    <name evidence="1" type="primary">rimO</name>
    <name type="ordered locus">MCA0082</name>
</gene>
<sequence length="437" mass="48467">MKLPRIGFISLGCPKALVDSERIITQLRAEGYAIVPTYQDADLVVVNTCGFIDAAVEESLEAIGEAVAENGKVIVTGCLGERPEEIQARHPAVLKVTGAHAYEEVMNAVHEHLPPLHDPFMDLVPPQGVRLTPRHYAYLKISEGCNHRCSFCIIPALRGDLVSRPIGEVMTEAERLVAAGVKEILVVSQDTSAYGADLGYRTGFWGGRPLRTRFQELARALGDLGVWIRLHYVYPYPHVDEVIPLMAEGRLLPYLDIPFQHASARVLKAMKRPAATENILAAIRRWREVCPELTLRSTFIVGFPGETEDEFRELLDFLEEARLDRVGCFEYSPVKGAAANALPDPVPAEVKAERHARLMEVQERISAARLRTRIGRTETVLVDEVVEEGAVARRRADAPEIDGQVFIDGATHLEVGEFVEATFEDADAHDLWARLAD</sequence>
<keyword id="KW-0004">4Fe-4S</keyword>
<keyword id="KW-0963">Cytoplasm</keyword>
<keyword id="KW-0408">Iron</keyword>
<keyword id="KW-0411">Iron-sulfur</keyword>
<keyword id="KW-0479">Metal-binding</keyword>
<keyword id="KW-1185">Reference proteome</keyword>
<keyword id="KW-0949">S-adenosyl-L-methionine</keyword>
<keyword id="KW-0808">Transferase</keyword>
<organism>
    <name type="scientific">Methylococcus capsulatus (strain ATCC 33009 / NCIMB 11132 / Bath)</name>
    <dbReference type="NCBI Taxonomy" id="243233"/>
    <lineage>
        <taxon>Bacteria</taxon>
        <taxon>Pseudomonadati</taxon>
        <taxon>Pseudomonadota</taxon>
        <taxon>Gammaproteobacteria</taxon>
        <taxon>Methylococcales</taxon>
        <taxon>Methylococcaceae</taxon>
        <taxon>Methylococcus</taxon>
    </lineage>
</organism>
<evidence type="ECO:0000255" key="1">
    <source>
        <dbReference type="HAMAP-Rule" id="MF_01865"/>
    </source>
</evidence>
<evidence type="ECO:0000255" key="2">
    <source>
        <dbReference type="PROSITE-ProRule" id="PRU01266"/>
    </source>
</evidence>
<feature type="chain" id="PRO_0000374896" description="Ribosomal protein uS12 methylthiotransferase RimO">
    <location>
        <begin position="1"/>
        <end position="437"/>
    </location>
</feature>
<feature type="domain" description="MTTase N-terminal" evidence="1">
    <location>
        <begin position="4"/>
        <end position="114"/>
    </location>
</feature>
<feature type="domain" description="Radical SAM core" evidence="2">
    <location>
        <begin position="131"/>
        <end position="368"/>
    </location>
</feature>
<feature type="domain" description="TRAM" evidence="1">
    <location>
        <begin position="371"/>
        <end position="437"/>
    </location>
</feature>
<feature type="binding site" evidence="1">
    <location>
        <position position="13"/>
    </location>
    <ligand>
        <name>[4Fe-4S] cluster</name>
        <dbReference type="ChEBI" id="CHEBI:49883"/>
        <label>1</label>
    </ligand>
</feature>
<feature type="binding site" evidence="1">
    <location>
        <position position="49"/>
    </location>
    <ligand>
        <name>[4Fe-4S] cluster</name>
        <dbReference type="ChEBI" id="CHEBI:49883"/>
        <label>1</label>
    </ligand>
</feature>
<feature type="binding site" evidence="1">
    <location>
        <position position="78"/>
    </location>
    <ligand>
        <name>[4Fe-4S] cluster</name>
        <dbReference type="ChEBI" id="CHEBI:49883"/>
        <label>1</label>
    </ligand>
</feature>
<feature type="binding site" evidence="1">
    <location>
        <position position="145"/>
    </location>
    <ligand>
        <name>[4Fe-4S] cluster</name>
        <dbReference type="ChEBI" id="CHEBI:49883"/>
        <label>2</label>
        <note>4Fe-4S-S-AdoMet</note>
    </ligand>
</feature>
<feature type="binding site" evidence="1">
    <location>
        <position position="149"/>
    </location>
    <ligand>
        <name>[4Fe-4S] cluster</name>
        <dbReference type="ChEBI" id="CHEBI:49883"/>
        <label>2</label>
        <note>4Fe-4S-S-AdoMet</note>
    </ligand>
</feature>
<feature type="binding site" evidence="1">
    <location>
        <position position="152"/>
    </location>
    <ligand>
        <name>[4Fe-4S] cluster</name>
        <dbReference type="ChEBI" id="CHEBI:49883"/>
        <label>2</label>
        <note>4Fe-4S-S-AdoMet</note>
    </ligand>
</feature>
<proteinExistence type="inferred from homology"/>
<comment type="function">
    <text evidence="1">Catalyzes the methylthiolation of an aspartic acid residue of ribosomal protein uS12.</text>
</comment>
<comment type="catalytic activity">
    <reaction evidence="1">
        <text>L-aspartate(89)-[ribosomal protein uS12]-hydrogen + (sulfur carrier)-SH + AH2 + 2 S-adenosyl-L-methionine = 3-methylsulfanyl-L-aspartate(89)-[ribosomal protein uS12]-hydrogen + (sulfur carrier)-H + 5'-deoxyadenosine + L-methionine + A + S-adenosyl-L-homocysteine + 2 H(+)</text>
        <dbReference type="Rhea" id="RHEA:37087"/>
        <dbReference type="Rhea" id="RHEA-COMP:10460"/>
        <dbReference type="Rhea" id="RHEA-COMP:10461"/>
        <dbReference type="Rhea" id="RHEA-COMP:14737"/>
        <dbReference type="Rhea" id="RHEA-COMP:14739"/>
        <dbReference type="ChEBI" id="CHEBI:13193"/>
        <dbReference type="ChEBI" id="CHEBI:15378"/>
        <dbReference type="ChEBI" id="CHEBI:17319"/>
        <dbReference type="ChEBI" id="CHEBI:17499"/>
        <dbReference type="ChEBI" id="CHEBI:29917"/>
        <dbReference type="ChEBI" id="CHEBI:29961"/>
        <dbReference type="ChEBI" id="CHEBI:57844"/>
        <dbReference type="ChEBI" id="CHEBI:57856"/>
        <dbReference type="ChEBI" id="CHEBI:59789"/>
        <dbReference type="ChEBI" id="CHEBI:64428"/>
        <dbReference type="ChEBI" id="CHEBI:73599"/>
        <dbReference type="EC" id="2.8.4.4"/>
    </reaction>
</comment>
<comment type="cofactor">
    <cofactor evidence="1">
        <name>[4Fe-4S] cluster</name>
        <dbReference type="ChEBI" id="CHEBI:49883"/>
    </cofactor>
    <text evidence="1">Binds 2 [4Fe-4S] clusters. One cluster is coordinated with 3 cysteines and an exchangeable S-adenosyl-L-methionine.</text>
</comment>
<comment type="subcellular location">
    <subcellularLocation>
        <location evidence="1">Cytoplasm</location>
    </subcellularLocation>
</comment>
<comment type="similarity">
    <text evidence="1">Belongs to the methylthiotransferase family. RimO subfamily.</text>
</comment>
<reference key="1">
    <citation type="journal article" date="2004" name="PLoS Biol.">
        <title>Genomic insights into methanotrophy: the complete genome sequence of Methylococcus capsulatus (Bath).</title>
        <authorList>
            <person name="Ward N.L."/>
            <person name="Larsen O."/>
            <person name="Sakwa J."/>
            <person name="Bruseth L."/>
            <person name="Khouri H.M."/>
            <person name="Durkin A.S."/>
            <person name="Dimitrov G."/>
            <person name="Jiang L."/>
            <person name="Scanlan D."/>
            <person name="Kang K.H."/>
            <person name="Lewis M.R."/>
            <person name="Nelson K.E."/>
            <person name="Methe B.A."/>
            <person name="Wu M."/>
            <person name="Heidelberg J.F."/>
            <person name="Paulsen I.T."/>
            <person name="Fouts D.E."/>
            <person name="Ravel J."/>
            <person name="Tettelin H."/>
            <person name="Ren Q."/>
            <person name="Read T.D."/>
            <person name="DeBoy R.T."/>
            <person name="Seshadri R."/>
            <person name="Salzberg S.L."/>
            <person name="Jensen H.B."/>
            <person name="Birkeland N.K."/>
            <person name="Nelson W.C."/>
            <person name="Dodson R.J."/>
            <person name="Grindhaug S.H."/>
            <person name="Holt I.E."/>
            <person name="Eidhammer I."/>
            <person name="Jonasen I."/>
            <person name="Vanaken S."/>
            <person name="Utterback T.R."/>
            <person name="Feldblyum T.V."/>
            <person name="Fraser C.M."/>
            <person name="Lillehaug J.R."/>
            <person name="Eisen J.A."/>
        </authorList>
    </citation>
    <scope>NUCLEOTIDE SEQUENCE [LARGE SCALE GENOMIC DNA]</scope>
    <source>
        <strain>ATCC 33009 / NCIMB 11132 / Bath</strain>
    </source>
</reference>